<proteinExistence type="inferred from homology"/>
<dbReference type="EC" id="2.1.2.1" evidence="1"/>
<dbReference type="EMBL" id="AM999887">
    <property type="protein sequence ID" value="CAQ54944.1"/>
    <property type="molecule type" value="Genomic_DNA"/>
</dbReference>
<dbReference type="RefSeq" id="WP_007302243.1">
    <property type="nucleotide sequence ID" value="NC_010981.1"/>
</dbReference>
<dbReference type="SMR" id="B3CM26"/>
<dbReference type="KEGG" id="wpi:WP0836"/>
<dbReference type="eggNOG" id="COG0112">
    <property type="taxonomic scope" value="Bacteria"/>
</dbReference>
<dbReference type="HOGENOM" id="CLU_022477_2_1_5"/>
<dbReference type="UniPathway" id="UPA00193"/>
<dbReference type="UniPathway" id="UPA00288">
    <property type="reaction ID" value="UER01023"/>
</dbReference>
<dbReference type="Proteomes" id="UP000008814">
    <property type="component" value="Chromosome"/>
</dbReference>
<dbReference type="GO" id="GO:0005829">
    <property type="term" value="C:cytosol"/>
    <property type="evidence" value="ECO:0007669"/>
    <property type="project" value="TreeGrafter"/>
</dbReference>
<dbReference type="GO" id="GO:0004372">
    <property type="term" value="F:glycine hydroxymethyltransferase activity"/>
    <property type="evidence" value="ECO:0007669"/>
    <property type="project" value="UniProtKB-UniRule"/>
</dbReference>
<dbReference type="GO" id="GO:0030170">
    <property type="term" value="F:pyridoxal phosphate binding"/>
    <property type="evidence" value="ECO:0007669"/>
    <property type="project" value="UniProtKB-UniRule"/>
</dbReference>
<dbReference type="GO" id="GO:0019264">
    <property type="term" value="P:glycine biosynthetic process from serine"/>
    <property type="evidence" value="ECO:0007669"/>
    <property type="project" value="UniProtKB-UniRule"/>
</dbReference>
<dbReference type="GO" id="GO:0035999">
    <property type="term" value="P:tetrahydrofolate interconversion"/>
    <property type="evidence" value="ECO:0007669"/>
    <property type="project" value="UniProtKB-UniRule"/>
</dbReference>
<dbReference type="CDD" id="cd00378">
    <property type="entry name" value="SHMT"/>
    <property type="match status" value="1"/>
</dbReference>
<dbReference type="FunFam" id="3.40.640.10:FF:000001">
    <property type="entry name" value="Serine hydroxymethyltransferase"/>
    <property type="match status" value="1"/>
</dbReference>
<dbReference type="Gene3D" id="3.90.1150.10">
    <property type="entry name" value="Aspartate Aminotransferase, domain 1"/>
    <property type="match status" value="1"/>
</dbReference>
<dbReference type="Gene3D" id="3.40.640.10">
    <property type="entry name" value="Type I PLP-dependent aspartate aminotransferase-like (Major domain)"/>
    <property type="match status" value="1"/>
</dbReference>
<dbReference type="HAMAP" id="MF_00051">
    <property type="entry name" value="SHMT"/>
    <property type="match status" value="1"/>
</dbReference>
<dbReference type="InterPro" id="IPR015424">
    <property type="entry name" value="PyrdxlP-dep_Trfase"/>
</dbReference>
<dbReference type="InterPro" id="IPR015421">
    <property type="entry name" value="PyrdxlP-dep_Trfase_major"/>
</dbReference>
<dbReference type="InterPro" id="IPR015422">
    <property type="entry name" value="PyrdxlP-dep_Trfase_small"/>
</dbReference>
<dbReference type="InterPro" id="IPR001085">
    <property type="entry name" value="Ser_HO-MeTrfase"/>
</dbReference>
<dbReference type="InterPro" id="IPR049943">
    <property type="entry name" value="Ser_HO-MeTrfase-like"/>
</dbReference>
<dbReference type="InterPro" id="IPR019798">
    <property type="entry name" value="Ser_HO-MeTrfase_PLP_BS"/>
</dbReference>
<dbReference type="InterPro" id="IPR039429">
    <property type="entry name" value="SHMT-like_dom"/>
</dbReference>
<dbReference type="NCBIfam" id="NF000586">
    <property type="entry name" value="PRK00011.1"/>
    <property type="match status" value="1"/>
</dbReference>
<dbReference type="PANTHER" id="PTHR11680">
    <property type="entry name" value="SERINE HYDROXYMETHYLTRANSFERASE"/>
    <property type="match status" value="1"/>
</dbReference>
<dbReference type="PANTHER" id="PTHR11680:SF35">
    <property type="entry name" value="SERINE HYDROXYMETHYLTRANSFERASE 1"/>
    <property type="match status" value="1"/>
</dbReference>
<dbReference type="Pfam" id="PF00464">
    <property type="entry name" value="SHMT"/>
    <property type="match status" value="1"/>
</dbReference>
<dbReference type="PIRSF" id="PIRSF000412">
    <property type="entry name" value="SHMT"/>
    <property type="match status" value="1"/>
</dbReference>
<dbReference type="SUPFAM" id="SSF53383">
    <property type="entry name" value="PLP-dependent transferases"/>
    <property type="match status" value="1"/>
</dbReference>
<dbReference type="PROSITE" id="PS00096">
    <property type="entry name" value="SHMT"/>
    <property type="match status" value="1"/>
</dbReference>
<name>GLYA_WOLPP</name>
<evidence type="ECO:0000255" key="1">
    <source>
        <dbReference type="HAMAP-Rule" id="MF_00051"/>
    </source>
</evidence>
<comment type="function">
    <text evidence="1">Catalyzes the reversible interconversion of serine and glycine with tetrahydrofolate (THF) serving as the one-carbon carrier. This reaction serves as the major source of one-carbon groups required for the biosynthesis of purines, thymidylate, methionine, and other important biomolecules. Also exhibits THF-independent aldolase activity toward beta-hydroxyamino acids, producing glycine and aldehydes, via a retro-aldol mechanism.</text>
</comment>
<comment type="catalytic activity">
    <reaction evidence="1">
        <text>(6R)-5,10-methylene-5,6,7,8-tetrahydrofolate + glycine + H2O = (6S)-5,6,7,8-tetrahydrofolate + L-serine</text>
        <dbReference type="Rhea" id="RHEA:15481"/>
        <dbReference type="ChEBI" id="CHEBI:15377"/>
        <dbReference type="ChEBI" id="CHEBI:15636"/>
        <dbReference type="ChEBI" id="CHEBI:33384"/>
        <dbReference type="ChEBI" id="CHEBI:57305"/>
        <dbReference type="ChEBI" id="CHEBI:57453"/>
        <dbReference type="EC" id="2.1.2.1"/>
    </reaction>
</comment>
<comment type="cofactor">
    <cofactor evidence="1">
        <name>pyridoxal 5'-phosphate</name>
        <dbReference type="ChEBI" id="CHEBI:597326"/>
    </cofactor>
</comment>
<comment type="pathway">
    <text evidence="1">One-carbon metabolism; tetrahydrofolate interconversion.</text>
</comment>
<comment type="pathway">
    <text evidence="1">Amino-acid biosynthesis; glycine biosynthesis; glycine from L-serine: step 1/1.</text>
</comment>
<comment type="subunit">
    <text evidence="1">Homodimer.</text>
</comment>
<comment type="subcellular location">
    <subcellularLocation>
        <location evidence="1">Cytoplasm</location>
    </subcellularLocation>
</comment>
<comment type="similarity">
    <text evidence="1">Belongs to the SHMT family.</text>
</comment>
<feature type="chain" id="PRO_1000091595" description="Serine hydroxymethyltransferase">
    <location>
        <begin position="1"/>
        <end position="425"/>
    </location>
</feature>
<feature type="binding site" evidence="1">
    <location>
        <position position="128"/>
    </location>
    <ligand>
        <name>(6S)-5,6,7,8-tetrahydrofolate</name>
        <dbReference type="ChEBI" id="CHEBI:57453"/>
    </ligand>
</feature>
<feature type="binding site" evidence="1">
    <location>
        <begin position="132"/>
        <end position="134"/>
    </location>
    <ligand>
        <name>(6S)-5,6,7,8-tetrahydrofolate</name>
        <dbReference type="ChEBI" id="CHEBI:57453"/>
    </ligand>
</feature>
<feature type="site" description="Plays an important role in substrate specificity" evidence="1">
    <location>
        <position position="236"/>
    </location>
</feature>
<feature type="modified residue" description="N6-(pyridoxal phosphate)lysine" evidence="1">
    <location>
        <position position="237"/>
    </location>
</feature>
<keyword id="KW-0028">Amino-acid biosynthesis</keyword>
<keyword id="KW-0963">Cytoplasm</keyword>
<keyword id="KW-0554">One-carbon metabolism</keyword>
<keyword id="KW-0663">Pyridoxal phosphate</keyword>
<keyword id="KW-0808">Transferase</keyword>
<sequence>MTIASERICNSENNLKSCDNEVYLSIEKELQRQRSQLQLIASENFASKAVMEAQGSFLTNKYAEGYPGKRYYCGCEYVDEVENLAIERLCKLFNVKFANVQPHSGSQANQAVFASLLTPGDTILGLSLNCGGHLTHGAAPNLSGKWFKSIQYTVNRDTYLLDMDEVERLALEHKPKLIIAGASAYPRKIDFERFREIANKVGAYLLADIAHYSGLIAAGCYPSPAEYAHIITSTTHKTLRGPRGGVVMTNDEALHKKIQSAVFPGLQGGPLMHVIAAKAVAFKEALAPEFKTYSKKVVENAKVLAQALQGHGLNIITGGTDSHIVLVDLRSQKLKGKDVVNSLERAGITCNKNSVPFDTEKPTITSGLRFGTAAETTRGLEKKDFKEIADLINEIIQGLIDGNSPDVEKAVKNKVESICSNFPIY</sequence>
<gene>
    <name evidence="1" type="primary">glyA</name>
    <name type="ordered locus">WP0836</name>
</gene>
<organism>
    <name type="scientific">Wolbachia pipientis subsp. Culex pipiens (strain wPip)</name>
    <dbReference type="NCBI Taxonomy" id="570417"/>
    <lineage>
        <taxon>Bacteria</taxon>
        <taxon>Pseudomonadati</taxon>
        <taxon>Pseudomonadota</taxon>
        <taxon>Alphaproteobacteria</taxon>
        <taxon>Rickettsiales</taxon>
        <taxon>Anaplasmataceae</taxon>
        <taxon>Wolbachieae</taxon>
        <taxon>Wolbachia</taxon>
    </lineage>
</organism>
<reference key="1">
    <citation type="journal article" date="2008" name="Mol. Biol. Evol.">
        <title>Genome evolution of Wolbachia strain wPip from the Culex pipiens group.</title>
        <authorList>
            <person name="Klasson L."/>
            <person name="Walker T."/>
            <person name="Sebaihia M."/>
            <person name="Sanders M.J."/>
            <person name="Quail M.A."/>
            <person name="Lord A."/>
            <person name="Sanders S."/>
            <person name="Earl J."/>
            <person name="O'Neill S.L."/>
            <person name="Thomson N."/>
            <person name="Sinkins S.P."/>
            <person name="Parkhill J."/>
        </authorList>
    </citation>
    <scope>NUCLEOTIDE SEQUENCE [LARGE SCALE GENOMIC DNA]</scope>
    <source>
        <strain>wPip</strain>
    </source>
</reference>
<accession>B3CM26</accession>
<protein>
    <recommendedName>
        <fullName evidence="1">Serine hydroxymethyltransferase</fullName>
        <shortName evidence="1">SHMT</shortName>
        <shortName evidence="1">Serine methylase</shortName>
        <ecNumber evidence="1">2.1.2.1</ecNumber>
    </recommendedName>
</protein>